<reference key="1">
    <citation type="journal article" date="1989" name="J. Bacteriol.">
        <title>Cloning and analysis of an Escherichia coli operon containing the rpmF gene for ribosomal protein L32 and the gene for a 30-kilodalton protein.</title>
        <authorList>
            <person name="Tanaka Y."/>
            <person name="Tsujimura A."/>
            <person name="Fujita N."/>
            <person name="Isono S."/>
            <person name="Isono K."/>
        </authorList>
    </citation>
    <scope>NUCLEOTIDE SEQUENCE [GENOMIC DNA]</scope>
    <scope>INDUCTION</scope>
    <source>
        <strain>K12 / W3110 / ATCC 27325 / DSM 5911</strain>
    </source>
</reference>
<reference key="2">
    <citation type="journal article" date="1996" name="DNA Res.">
        <title>A 718-kb DNA sequence of the Escherichia coli K-12 genome corresponding to the 12.7-28.0 min region on the linkage map.</title>
        <authorList>
            <person name="Oshima T."/>
            <person name="Aiba H."/>
            <person name="Baba T."/>
            <person name="Fujita K."/>
            <person name="Hayashi K."/>
            <person name="Honjo A."/>
            <person name="Ikemoto K."/>
            <person name="Inada T."/>
            <person name="Itoh T."/>
            <person name="Kajihara M."/>
            <person name="Kanai K."/>
            <person name="Kashimoto K."/>
            <person name="Kimura S."/>
            <person name="Kitagawa M."/>
            <person name="Makino K."/>
            <person name="Masuda S."/>
            <person name="Miki T."/>
            <person name="Mizobuchi K."/>
            <person name="Mori H."/>
            <person name="Motomura K."/>
            <person name="Nakamura Y."/>
            <person name="Nashimoto H."/>
            <person name="Nishio Y."/>
            <person name="Saito N."/>
            <person name="Sampei G."/>
            <person name="Seki Y."/>
            <person name="Tagami H."/>
            <person name="Takemoto K."/>
            <person name="Wada C."/>
            <person name="Yamamoto Y."/>
            <person name="Yano M."/>
            <person name="Horiuchi T."/>
        </authorList>
    </citation>
    <scope>NUCLEOTIDE SEQUENCE [LARGE SCALE GENOMIC DNA]</scope>
    <source>
        <strain>K12 / W3110 / ATCC 27325 / DSM 5911</strain>
    </source>
</reference>
<reference key="3">
    <citation type="journal article" date="1997" name="Science">
        <title>The complete genome sequence of Escherichia coli K-12.</title>
        <authorList>
            <person name="Blattner F.R."/>
            <person name="Plunkett G. III"/>
            <person name="Bloch C.A."/>
            <person name="Perna N.T."/>
            <person name="Burland V."/>
            <person name="Riley M."/>
            <person name="Collado-Vides J."/>
            <person name="Glasner J.D."/>
            <person name="Rode C.K."/>
            <person name="Mayhew G.F."/>
            <person name="Gregor J."/>
            <person name="Davis N.W."/>
            <person name="Kirkpatrick H.A."/>
            <person name="Goeden M.A."/>
            <person name="Rose D.J."/>
            <person name="Mau B."/>
            <person name="Shao Y."/>
        </authorList>
    </citation>
    <scope>NUCLEOTIDE SEQUENCE [LARGE SCALE GENOMIC DNA]</scope>
    <source>
        <strain>K12 / MG1655 / ATCC 47076</strain>
    </source>
</reference>
<reference key="4">
    <citation type="journal article" date="2006" name="Mol. Syst. Biol.">
        <title>Highly accurate genome sequences of Escherichia coli K-12 strains MG1655 and W3110.</title>
        <authorList>
            <person name="Hayashi K."/>
            <person name="Morooka N."/>
            <person name="Yamamoto Y."/>
            <person name="Fujita K."/>
            <person name="Isono K."/>
            <person name="Choi S."/>
            <person name="Ohtsubo E."/>
            <person name="Baba T."/>
            <person name="Wanner B.L."/>
            <person name="Mori H."/>
            <person name="Horiuchi T."/>
        </authorList>
    </citation>
    <scope>NUCLEOTIDE SEQUENCE [LARGE SCALE GENOMIC DNA]</scope>
    <source>
        <strain>K12 / W3110 / ATCC 27325 / DSM 5911</strain>
    </source>
</reference>
<reference key="5">
    <citation type="journal article" date="1992" name="J. Bacteriol.">
        <title>Physical locations of genes in the rne (ams)-rpmF-plsX-fab region of the Escherichia coli K-12 chromosome.</title>
        <authorList>
            <person name="Oh W."/>
            <person name="Larson T.J."/>
        </authorList>
    </citation>
    <scope>NUCLEOTIDE SEQUENCE [GENOMIC DNA] OF 1-72</scope>
    <source>
        <strain>K12</strain>
    </source>
</reference>
<reference key="6">
    <citation type="journal article" date="2016" name="J. Exp. Bot.">
        <title>Essential role of conserved DUF177A protein in plastid 23S rRNA accumulation and plant embryogenesis.</title>
        <authorList>
            <person name="Yang J."/>
            <person name="Suzuki M."/>
            <person name="McCarty D.R."/>
        </authorList>
    </citation>
    <scope>FUNCTION</scope>
    <scope>DISRUPTION PHENOTYPE</scope>
    <source>
        <strain>K12 / BW25113</strain>
    </source>
</reference>
<proteinExistence type="evidence at transcript level"/>
<comment type="function">
    <text evidence="6">Plays a role in synthesis, processing and/or stability of 23S rRNA.</text>
</comment>
<comment type="induction">
    <text evidence="1">Part of the yceD-rpmF operon.</text>
</comment>
<comment type="disruption phenotype">
    <text evidence="2">Accumulates reduced levels of 23S rRNA, no significant difference in 16S or 5S rRNA levels, nor in rpmF transcripts (ribosomal protein L32, next gene in its operon). No visible growth defects on rich medium at 37 or 25 degrees Celsius.</text>
</comment>
<comment type="similarity">
    <text evidence="5">Belongs to the DUF177 domain family.</text>
</comment>
<evidence type="ECO:0000269" key="1">
    <source>
    </source>
</evidence>
<evidence type="ECO:0000269" key="2">
    <source>
    </source>
</evidence>
<evidence type="ECO:0000303" key="3">
    <source>
    </source>
</evidence>
<evidence type="ECO:0000303" key="4">
    <source>
    </source>
</evidence>
<evidence type="ECO:0000305" key="5"/>
<evidence type="ECO:0000305" key="6">
    <source>
    </source>
</evidence>
<organism>
    <name type="scientific">Escherichia coli (strain K12)</name>
    <dbReference type="NCBI Taxonomy" id="83333"/>
    <lineage>
        <taxon>Bacteria</taxon>
        <taxon>Pseudomonadati</taxon>
        <taxon>Pseudomonadota</taxon>
        <taxon>Gammaproteobacteria</taxon>
        <taxon>Enterobacterales</taxon>
        <taxon>Enterobacteriaceae</taxon>
        <taxon>Escherichia</taxon>
    </lineage>
</organism>
<dbReference type="EMBL" id="M29698">
    <property type="protein sequence ID" value="AAA24574.1"/>
    <property type="molecule type" value="Genomic_DNA"/>
</dbReference>
<dbReference type="EMBL" id="U00096">
    <property type="protein sequence ID" value="AAC74172.1"/>
    <property type="molecule type" value="Genomic_DNA"/>
</dbReference>
<dbReference type="EMBL" id="AP009048">
    <property type="protein sequence ID" value="BAA35896.1"/>
    <property type="molecule type" value="Genomic_DNA"/>
</dbReference>
<dbReference type="EMBL" id="M96791">
    <property type="protein sequence ID" value="AAA23830.1"/>
    <property type="molecule type" value="Genomic_DNA"/>
</dbReference>
<dbReference type="PIR" id="JV0047">
    <property type="entry name" value="JV0047"/>
</dbReference>
<dbReference type="RefSeq" id="NP_415606.1">
    <property type="nucleotide sequence ID" value="NC_000913.3"/>
</dbReference>
<dbReference type="RefSeq" id="WP_001174481.1">
    <property type="nucleotide sequence ID" value="NZ_STEB01000016.1"/>
</dbReference>
<dbReference type="BioGRID" id="4261028">
    <property type="interactions" value="27"/>
</dbReference>
<dbReference type="BioGRID" id="850022">
    <property type="interactions" value="1"/>
</dbReference>
<dbReference type="FunCoup" id="P0AB28">
    <property type="interactions" value="177"/>
</dbReference>
<dbReference type="IntAct" id="P0AB28">
    <property type="interactions" value="11"/>
</dbReference>
<dbReference type="STRING" id="511145.b1088"/>
<dbReference type="jPOST" id="P0AB28"/>
<dbReference type="PaxDb" id="511145-b1088"/>
<dbReference type="EnsemblBacteria" id="AAC74172">
    <property type="protein sequence ID" value="AAC74172"/>
    <property type="gene ID" value="b1088"/>
</dbReference>
<dbReference type="GeneID" id="86863582"/>
<dbReference type="GeneID" id="945650"/>
<dbReference type="KEGG" id="ecj:JW1074"/>
<dbReference type="KEGG" id="eco:b1088"/>
<dbReference type="KEGG" id="ecoc:C3026_06585"/>
<dbReference type="PATRIC" id="fig|511145.12.peg.1131"/>
<dbReference type="EchoBASE" id="EB1109"/>
<dbReference type="eggNOG" id="COG1399">
    <property type="taxonomic scope" value="Bacteria"/>
</dbReference>
<dbReference type="HOGENOM" id="CLU_094127_2_1_6"/>
<dbReference type="InParanoid" id="P0AB28"/>
<dbReference type="OMA" id="HITYCFS"/>
<dbReference type="OrthoDB" id="9786771at2"/>
<dbReference type="PhylomeDB" id="P0AB28"/>
<dbReference type="BioCyc" id="EcoCyc:EG11119-MONOMER"/>
<dbReference type="PRO" id="PR:P0AB28"/>
<dbReference type="Proteomes" id="UP000000625">
    <property type="component" value="Chromosome"/>
</dbReference>
<dbReference type="GO" id="GO:0005829">
    <property type="term" value="C:cytosol"/>
    <property type="evidence" value="ECO:0000314"/>
    <property type="project" value="EcoCyc"/>
</dbReference>
<dbReference type="GO" id="GO:0042254">
    <property type="term" value="P:ribosome biogenesis"/>
    <property type="evidence" value="ECO:0007669"/>
    <property type="project" value="UniProtKB-KW"/>
</dbReference>
<dbReference type="InterPro" id="IPR003772">
    <property type="entry name" value="YceD"/>
</dbReference>
<dbReference type="InterPro" id="IPR039255">
    <property type="entry name" value="YceD_bac"/>
</dbReference>
<dbReference type="NCBIfam" id="NF008395">
    <property type="entry name" value="PRK11193.1"/>
    <property type="match status" value="1"/>
</dbReference>
<dbReference type="PANTHER" id="PTHR38099">
    <property type="entry name" value="LARGE RIBOSOMAL RNA SUBUNIT ACCUMULATION PROTEIN YCED"/>
    <property type="match status" value="1"/>
</dbReference>
<dbReference type="PANTHER" id="PTHR38099:SF1">
    <property type="entry name" value="LARGE RIBOSOMAL RNA SUBUNIT ACCUMULATION PROTEIN YCED"/>
    <property type="match status" value="1"/>
</dbReference>
<dbReference type="Pfam" id="PF02620">
    <property type="entry name" value="YceD"/>
    <property type="match status" value="1"/>
</dbReference>
<sequence>MQKVKLPLTLDPVRTAQKRLDYQGIYTPDQVERVAESVVSVDSDVECSMSFAIDNQRLAVLNGDAKVTVTLECQRCGKPFTHQVYTTYCFSPVRSDEQAEALPEAYEPIEVNEFGEIDLLAMVEDEIILALPVVPVHDSEHCEVSEADMVFGELPEEAQKPNPFAVLASLKRK</sequence>
<name>YCED_ECOLI</name>
<protein>
    <recommendedName>
        <fullName>Large ribosomal RNA subunit accumulation protein YceD</fullName>
    </recommendedName>
    <alternativeName>
        <fullName evidence="4">23S rRNA accumulation protein YceD</fullName>
    </alternativeName>
    <alternativeName>
        <fullName evidence="3">G30K</fullName>
    </alternativeName>
</protein>
<feature type="chain" id="PRO_0000168811" description="Large ribosomal RNA subunit accumulation protein YceD">
    <location>
        <begin position="1"/>
        <end position="173"/>
    </location>
</feature>
<keyword id="KW-1185">Reference proteome</keyword>
<keyword id="KW-0690">Ribosome biogenesis</keyword>
<accession>P0AB28</accession>
<accession>P14189</accession>
<gene>
    <name type="primary">yceD</name>
    <name evidence="3" type="synonym">g30k</name>
    <name type="ordered locus">b1088</name>
    <name type="ordered locus">JW1074</name>
</gene>